<proteinExistence type="inferred from homology"/>
<name>RS21_MALP2</name>
<dbReference type="EMBL" id="BA000026">
    <property type="protein sequence ID" value="BAC44708.1"/>
    <property type="molecule type" value="Genomic_DNA"/>
</dbReference>
<dbReference type="RefSeq" id="WP_011077737.1">
    <property type="nucleotide sequence ID" value="NC_004432.1"/>
</dbReference>
<dbReference type="SMR" id="Q8EUK4"/>
<dbReference type="FunCoup" id="Q8EUK4">
    <property type="interactions" value="133"/>
</dbReference>
<dbReference type="STRING" id="272633.gene:10732039"/>
<dbReference type="KEGG" id="mpe:MYPE9180"/>
<dbReference type="eggNOG" id="ENOG5030N1W">
    <property type="taxonomic scope" value="Bacteria"/>
</dbReference>
<dbReference type="HOGENOM" id="CLU_207223_0_0_14"/>
<dbReference type="InParanoid" id="Q8EUK4"/>
<dbReference type="Proteomes" id="UP000002522">
    <property type="component" value="Chromosome"/>
</dbReference>
<dbReference type="GO" id="GO:1990904">
    <property type="term" value="C:ribonucleoprotein complex"/>
    <property type="evidence" value="ECO:0007669"/>
    <property type="project" value="UniProtKB-KW"/>
</dbReference>
<dbReference type="GO" id="GO:0005840">
    <property type="term" value="C:ribosome"/>
    <property type="evidence" value="ECO:0007669"/>
    <property type="project" value="UniProtKB-KW"/>
</dbReference>
<dbReference type="GO" id="GO:0003735">
    <property type="term" value="F:structural constituent of ribosome"/>
    <property type="evidence" value="ECO:0007669"/>
    <property type="project" value="InterPro"/>
</dbReference>
<dbReference type="GO" id="GO:0006412">
    <property type="term" value="P:translation"/>
    <property type="evidence" value="ECO:0007669"/>
    <property type="project" value="UniProtKB-UniRule"/>
</dbReference>
<dbReference type="HAMAP" id="MF_00358">
    <property type="entry name" value="Ribosomal_bS21"/>
    <property type="match status" value="1"/>
</dbReference>
<dbReference type="InterPro" id="IPR001911">
    <property type="entry name" value="Ribosomal_bS21"/>
</dbReference>
<dbReference type="NCBIfam" id="TIGR00030">
    <property type="entry name" value="S21p"/>
    <property type="match status" value="1"/>
</dbReference>
<dbReference type="Pfam" id="PF01165">
    <property type="entry name" value="Ribosomal_S21"/>
    <property type="match status" value="1"/>
</dbReference>
<evidence type="ECO:0000255" key="1">
    <source>
        <dbReference type="HAMAP-Rule" id="MF_00358"/>
    </source>
</evidence>
<evidence type="ECO:0000256" key="2">
    <source>
        <dbReference type="SAM" id="MobiDB-lite"/>
    </source>
</evidence>
<evidence type="ECO:0000305" key="3"/>
<protein>
    <recommendedName>
        <fullName evidence="1">Small ribosomal subunit protein bS21</fullName>
    </recommendedName>
    <alternativeName>
        <fullName evidence="3">30S ribosomal protein S21</fullName>
    </alternativeName>
</protein>
<comment type="similarity">
    <text evidence="1">Belongs to the bacterial ribosomal protein bS21 family.</text>
</comment>
<keyword id="KW-1185">Reference proteome</keyword>
<keyword id="KW-0687">Ribonucleoprotein</keyword>
<keyword id="KW-0689">Ribosomal protein</keyword>
<accession>Q8EUK4</accession>
<gene>
    <name evidence="1" type="primary">rpsU</name>
    <name type="ordered locus">MYPE9180</name>
</gene>
<sequence length="64" mass="7713">MPKVEVKNGDLDAALKSFKRITSETEKAYKKHEFYLRPGLRKKEKEKAAAKKRNKYNKRRSFYY</sequence>
<organism>
    <name type="scientific">Malacoplasma penetrans (strain HF-2)</name>
    <name type="common">Mycoplasma penetrans</name>
    <dbReference type="NCBI Taxonomy" id="272633"/>
    <lineage>
        <taxon>Bacteria</taxon>
        <taxon>Bacillati</taxon>
        <taxon>Mycoplasmatota</taxon>
        <taxon>Mycoplasmoidales</taxon>
        <taxon>Mycoplasmoidaceae</taxon>
        <taxon>Malacoplasma</taxon>
    </lineage>
</organism>
<feature type="chain" id="PRO_0000266709" description="Small ribosomal subunit protein bS21">
    <location>
        <begin position="1"/>
        <end position="64"/>
    </location>
</feature>
<feature type="region of interest" description="Disordered" evidence="2">
    <location>
        <begin position="42"/>
        <end position="64"/>
    </location>
</feature>
<feature type="compositionally biased region" description="Basic residues" evidence="2">
    <location>
        <begin position="50"/>
        <end position="64"/>
    </location>
</feature>
<reference key="1">
    <citation type="journal article" date="2002" name="Nucleic Acids Res.">
        <title>The complete genomic sequence of Mycoplasma penetrans, an intracellular bacterial pathogen in humans.</title>
        <authorList>
            <person name="Sasaki Y."/>
            <person name="Ishikawa J."/>
            <person name="Yamashita A."/>
            <person name="Oshima K."/>
            <person name="Kenri T."/>
            <person name="Furuya K."/>
            <person name="Yoshino C."/>
            <person name="Horino A."/>
            <person name="Shiba T."/>
            <person name="Sasaki T."/>
            <person name="Hattori M."/>
        </authorList>
    </citation>
    <scope>NUCLEOTIDE SEQUENCE [LARGE SCALE GENOMIC DNA]</scope>
    <source>
        <strain>HF-2</strain>
    </source>
</reference>